<organism>
    <name type="scientific">Lachnoclostridium phytofermentans (strain ATCC 700394 / DSM 18823 / ISDg)</name>
    <name type="common">Clostridium phytofermentans</name>
    <dbReference type="NCBI Taxonomy" id="357809"/>
    <lineage>
        <taxon>Bacteria</taxon>
        <taxon>Bacillati</taxon>
        <taxon>Bacillota</taxon>
        <taxon>Clostridia</taxon>
        <taxon>Lachnospirales</taxon>
        <taxon>Lachnospiraceae</taxon>
    </lineage>
</organism>
<comment type="function">
    <text evidence="1">Functions in the biosynthesis of branched-chain amino acids. Catalyzes the dehydration of (2R,3R)-2,3-dihydroxy-3-methylpentanoate (2,3-dihydroxy-3-methylvalerate) into 2-oxo-3-methylpentanoate (2-oxo-3-methylvalerate) and of (2R)-2,3-dihydroxy-3-methylbutanoate (2,3-dihydroxyisovalerate) into 2-oxo-3-methylbutanoate (2-oxoisovalerate), the penultimate precursor to L-isoleucine and L-valine, respectively.</text>
</comment>
<comment type="catalytic activity">
    <reaction evidence="1">
        <text>(2R)-2,3-dihydroxy-3-methylbutanoate = 3-methyl-2-oxobutanoate + H2O</text>
        <dbReference type="Rhea" id="RHEA:24809"/>
        <dbReference type="ChEBI" id="CHEBI:11851"/>
        <dbReference type="ChEBI" id="CHEBI:15377"/>
        <dbReference type="ChEBI" id="CHEBI:49072"/>
        <dbReference type="EC" id="4.2.1.9"/>
    </reaction>
    <physiologicalReaction direction="left-to-right" evidence="1">
        <dbReference type="Rhea" id="RHEA:24810"/>
    </physiologicalReaction>
</comment>
<comment type="catalytic activity">
    <reaction evidence="1">
        <text>(2R,3R)-2,3-dihydroxy-3-methylpentanoate = (S)-3-methyl-2-oxopentanoate + H2O</text>
        <dbReference type="Rhea" id="RHEA:27694"/>
        <dbReference type="ChEBI" id="CHEBI:15377"/>
        <dbReference type="ChEBI" id="CHEBI:35146"/>
        <dbReference type="ChEBI" id="CHEBI:49258"/>
        <dbReference type="EC" id="4.2.1.9"/>
    </reaction>
    <physiologicalReaction direction="left-to-right" evidence="1">
        <dbReference type="Rhea" id="RHEA:27695"/>
    </physiologicalReaction>
</comment>
<comment type="cofactor">
    <cofactor evidence="1">
        <name>[2Fe-2S] cluster</name>
        <dbReference type="ChEBI" id="CHEBI:190135"/>
    </cofactor>
    <text evidence="1">Binds 1 [2Fe-2S] cluster per subunit. This cluster acts as a Lewis acid cofactor.</text>
</comment>
<comment type="cofactor">
    <cofactor evidence="1">
        <name>Mg(2+)</name>
        <dbReference type="ChEBI" id="CHEBI:18420"/>
    </cofactor>
</comment>
<comment type="pathway">
    <text evidence="1">Amino-acid biosynthesis; L-isoleucine biosynthesis; L-isoleucine from 2-oxobutanoate: step 3/4.</text>
</comment>
<comment type="pathway">
    <text evidence="1">Amino-acid biosynthesis; L-valine biosynthesis; L-valine from pyruvate: step 3/4.</text>
</comment>
<comment type="subunit">
    <text evidence="1">Homodimer.</text>
</comment>
<comment type="similarity">
    <text evidence="1">Belongs to the IlvD/Edd family.</text>
</comment>
<name>ILVD_LACP7</name>
<protein>
    <recommendedName>
        <fullName evidence="1">Dihydroxy-acid dehydratase</fullName>
        <shortName evidence="1">DAD</shortName>
        <ecNumber evidence="1">4.2.1.9</ecNumber>
    </recommendedName>
</protein>
<gene>
    <name evidence="1" type="primary">ilvD</name>
    <name type="ordered locus">Cphy_3348</name>
</gene>
<keyword id="KW-0001">2Fe-2S</keyword>
<keyword id="KW-0028">Amino-acid biosynthesis</keyword>
<keyword id="KW-0100">Branched-chain amino acid biosynthesis</keyword>
<keyword id="KW-0408">Iron</keyword>
<keyword id="KW-0411">Iron-sulfur</keyword>
<keyword id="KW-0456">Lyase</keyword>
<keyword id="KW-0460">Magnesium</keyword>
<keyword id="KW-0479">Metal-binding</keyword>
<keyword id="KW-1185">Reference proteome</keyword>
<accession>A9KT71</accession>
<proteinExistence type="inferred from homology"/>
<feature type="chain" id="PRO_1000073973" description="Dihydroxy-acid dehydratase">
    <location>
        <begin position="1"/>
        <end position="557"/>
    </location>
</feature>
<feature type="active site" description="Proton acceptor" evidence="1">
    <location>
        <position position="468"/>
    </location>
</feature>
<feature type="binding site" evidence="1">
    <location>
        <position position="78"/>
    </location>
    <ligand>
        <name>Mg(2+)</name>
        <dbReference type="ChEBI" id="CHEBI:18420"/>
    </ligand>
</feature>
<feature type="binding site" evidence="1">
    <location>
        <position position="119"/>
    </location>
    <ligand>
        <name>[2Fe-2S] cluster</name>
        <dbReference type="ChEBI" id="CHEBI:190135"/>
    </ligand>
</feature>
<feature type="binding site" evidence="1">
    <location>
        <position position="120"/>
    </location>
    <ligand>
        <name>Mg(2+)</name>
        <dbReference type="ChEBI" id="CHEBI:18420"/>
    </ligand>
</feature>
<feature type="binding site" description="via carbamate group" evidence="1">
    <location>
        <position position="121"/>
    </location>
    <ligand>
        <name>Mg(2+)</name>
        <dbReference type="ChEBI" id="CHEBI:18420"/>
    </ligand>
</feature>
<feature type="binding site" evidence="1">
    <location>
        <position position="191"/>
    </location>
    <ligand>
        <name>[2Fe-2S] cluster</name>
        <dbReference type="ChEBI" id="CHEBI:190135"/>
    </ligand>
</feature>
<feature type="binding site" evidence="1">
    <location>
        <position position="442"/>
    </location>
    <ligand>
        <name>Mg(2+)</name>
        <dbReference type="ChEBI" id="CHEBI:18420"/>
    </ligand>
</feature>
<feature type="modified residue" description="N6-carboxylysine" evidence="1">
    <location>
        <position position="121"/>
    </location>
</feature>
<sequence>MKSDAVTKGIQQAPHRSLFNALGLTKEELDKPLIGIVSSYNEIVPGHMNLDKIVEAVKLGVAMAGGTPIVFPAIAVCDGIAMGHIGMKYSLVTRDLIADSTEAMAMAHSFDALVMVPNCDKNVPGLLMAAARVNIPTIFVSGGPMLAGRVHGEKRSLSSMFEAVGAHAAGKMTEEEVEEFENKVCPTCGSCSGMYTANSMNCLTEALGMGLKGNGTIPAVYSERIRLAKHAGMKIMELLQNNIRPRDIMSEKAFLNALAVDMALGCSTNSMLHLPAIAHEAGVDLNVDIANEISAKTPNLCHLAPAGHTYMEDLNEAGGVYAVMNELDKKGLLYTDLITCTGKTIKENIEGCVNRDPDTIRPIENPYSQTGGIAVLKGNLAPDSGVVKRSAVAPEMMVHVGPARVFDCEEDAIDAIKSGKIVAGDVVVIRYEGPKGGPGMREMLNPTSAIAGMGLGSSVALITDGRFSGASRGASIGHVSPEAAVGGNIALIEEGDIIKIDIPNNSLNFVVSDEELERRRVNWSPREPKITTGYLARYTAMVTSGNRGAILEVPRVK</sequence>
<dbReference type="EC" id="4.2.1.9" evidence="1"/>
<dbReference type="EMBL" id="CP000885">
    <property type="protein sequence ID" value="ABX43701.1"/>
    <property type="molecule type" value="Genomic_DNA"/>
</dbReference>
<dbReference type="RefSeq" id="WP_012201350.1">
    <property type="nucleotide sequence ID" value="NC_010001.1"/>
</dbReference>
<dbReference type="SMR" id="A9KT71"/>
<dbReference type="STRING" id="357809.Cphy_3348"/>
<dbReference type="KEGG" id="cpy:Cphy_3348"/>
<dbReference type="eggNOG" id="COG0129">
    <property type="taxonomic scope" value="Bacteria"/>
</dbReference>
<dbReference type="HOGENOM" id="CLU_014271_4_2_9"/>
<dbReference type="OrthoDB" id="9807077at2"/>
<dbReference type="UniPathway" id="UPA00047">
    <property type="reaction ID" value="UER00057"/>
</dbReference>
<dbReference type="UniPathway" id="UPA00049">
    <property type="reaction ID" value="UER00061"/>
</dbReference>
<dbReference type="Proteomes" id="UP000000370">
    <property type="component" value="Chromosome"/>
</dbReference>
<dbReference type="GO" id="GO:0005829">
    <property type="term" value="C:cytosol"/>
    <property type="evidence" value="ECO:0007669"/>
    <property type="project" value="TreeGrafter"/>
</dbReference>
<dbReference type="GO" id="GO:0051537">
    <property type="term" value="F:2 iron, 2 sulfur cluster binding"/>
    <property type="evidence" value="ECO:0007669"/>
    <property type="project" value="UniProtKB-UniRule"/>
</dbReference>
<dbReference type="GO" id="GO:0004160">
    <property type="term" value="F:dihydroxy-acid dehydratase activity"/>
    <property type="evidence" value="ECO:0007669"/>
    <property type="project" value="UniProtKB-UniRule"/>
</dbReference>
<dbReference type="GO" id="GO:0000287">
    <property type="term" value="F:magnesium ion binding"/>
    <property type="evidence" value="ECO:0007669"/>
    <property type="project" value="UniProtKB-UniRule"/>
</dbReference>
<dbReference type="GO" id="GO:0009097">
    <property type="term" value="P:isoleucine biosynthetic process"/>
    <property type="evidence" value="ECO:0007669"/>
    <property type="project" value="UniProtKB-UniRule"/>
</dbReference>
<dbReference type="GO" id="GO:0009099">
    <property type="term" value="P:L-valine biosynthetic process"/>
    <property type="evidence" value="ECO:0007669"/>
    <property type="project" value="UniProtKB-UniRule"/>
</dbReference>
<dbReference type="FunFam" id="3.50.30.80:FF:000001">
    <property type="entry name" value="Dihydroxy-acid dehydratase"/>
    <property type="match status" value="1"/>
</dbReference>
<dbReference type="Gene3D" id="3.50.30.80">
    <property type="entry name" value="IlvD/EDD C-terminal domain-like"/>
    <property type="match status" value="1"/>
</dbReference>
<dbReference type="HAMAP" id="MF_00012">
    <property type="entry name" value="IlvD"/>
    <property type="match status" value="1"/>
</dbReference>
<dbReference type="InterPro" id="IPR042096">
    <property type="entry name" value="Dihydro-acid_dehy_C"/>
</dbReference>
<dbReference type="InterPro" id="IPR004404">
    <property type="entry name" value="DihydroxyA_deHydtase"/>
</dbReference>
<dbReference type="InterPro" id="IPR020558">
    <property type="entry name" value="DiOHA_6PGluconate_deHydtase_CS"/>
</dbReference>
<dbReference type="InterPro" id="IPR056740">
    <property type="entry name" value="ILV_EDD_C"/>
</dbReference>
<dbReference type="InterPro" id="IPR000581">
    <property type="entry name" value="ILV_EDD_N"/>
</dbReference>
<dbReference type="InterPro" id="IPR037237">
    <property type="entry name" value="IlvD/EDD_N"/>
</dbReference>
<dbReference type="NCBIfam" id="TIGR00110">
    <property type="entry name" value="ilvD"/>
    <property type="match status" value="1"/>
</dbReference>
<dbReference type="NCBIfam" id="NF002068">
    <property type="entry name" value="PRK00911.1"/>
    <property type="match status" value="1"/>
</dbReference>
<dbReference type="PANTHER" id="PTHR43661">
    <property type="entry name" value="D-XYLONATE DEHYDRATASE"/>
    <property type="match status" value="1"/>
</dbReference>
<dbReference type="PANTHER" id="PTHR43661:SF3">
    <property type="entry name" value="D-XYLONATE DEHYDRATASE YAGF-RELATED"/>
    <property type="match status" value="1"/>
</dbReference>
<dbReference type="Pfam" id="PF24877">
    <property type="entry name" value="ILV_EDD_C"/>
    <property type="match status" value="1"/>
</dbReference>
<dbReference type="Pfam" id="PF00920">
    <property type="entry name" value="ILVD_EDD_N"/>
    <property type="match status" value="1"/>
</dbReference>
<dbReference type="SUPFAM" id="SSF143975">
    <property type="entry name" value="IlvD/EDD N-terminal domain-like"/>
    <property type="match status" value="1"/>
</dbReference>
<dbReference type="SUPFAM" id="SSF52016">
    <property type="entry name" value="LeuD/IlvD-like"/>
    <property type="match status" value="1"/>
</dbReference>
<dbReference type="PROSITE" id="PS00886">
    <property type="entry name" value="ILVD_EDD_1"/>
    <property type="match status" value="1"/>
</dbReference>
<dbReference type="PROSITE" id="PS00887">
    <property type="entry name" value="ILVD_EDD_2"/>
    <property type="match status" value="1"/>
</dbReference>
<reference key="1">
    <citation type="submission" date="2007-11" db="EMBL/GenBank/DDBJ databases">
        <title>Complete genome sequence of Clostridium phytofermentans ISDg.</title>
        <authorList>
            <person name="Leschine S.B."/>
            <person name="Warnick T.A."/>
            <person name="Blanchard J.L."/>
            <person name="Schnell D.J."/>
            <person name="Petit E.L."/>
            <person name="LaTouf W.G."/>
            <person name="Copeland A."/>
            <person name="Lucas S."/>
            <person name="Lapidus A."/>
            <person name="Barry K."/>
            <person name="Glavina del Rio T."/>
            <person name="Dalin E."/>
            <person name="Tice H."/>
            <person name="Pitluck S."/>
            <person name="Kiss H."/>
            <person name="Brettin T."/>
            <person name="Bruce D."/>
            <person name="Detter J.C."/>
            <person name="Han C."/>
            <person name="Kuske C."/>
            <person name="Schmutz J."/>
            <person name="Larimer F."/>
            <person name="Land M."/>
            <person name="Hauser L."/>
            <person name="Kyrpides N."/>
            <person name="Kim E.A."/>
            <person name="Richardson P."/>
        </authorList>
    </citation>
    <scope>NUCLEOTIDE SEQUENCE [LARGE SCALE GENOMIC DNA]</scope>
    <source>
        <strain>ATCC 700394 / DSM 18823 / ISDg</strain>
    </source>
</reference>
<evidence type="ECO:0000255" key="1">
    <source>
        <dbReference type="HAMAP-Rule" id="MF_00012"/>
    </source>
</evidence>